<dbReference type="EC" id="5.4.99.62" evidence="1"/>
<dbReference type="EMBL" id="AE005674">
    <property type="protein sequence ID" value="AAN45269.2"/>
    <property type="molecule type" value="Genomic_DNA"/>
</dbReference>
<dbReference type="EMBL" id="AE014073">
    <property type="protein sequence ID" value="AAP18928.1"/>
    <property type="molecule type" value="Genomic_DNA"/>
</dbReference>
<dbReference type="RefSeq" id="NP_709562.2">
    <property type="nucleotide sequence ID" value="NC_004337.2"/>
</dbReference>
<dbReference type="RefSeq" id="WP_000715936.1">
    <property type="nucleotide sequence ID" value="NZ_WPGW01000238.1"/>
</dbReference>
<dbReference type="SMR" id="Q83PJ1"/>
<dbReference type="STRING" id="198214.SF3829"/>
<dbReference type="PaxDb" id="198214-SF3829"/>
<dbReference type="GeneID" id="1024132"/>
<dbReference type="GeneID" id="93778201"/>
<dbReference type="KEGG" id="sfl:SF3829"/>
<dbReference type="KEGG" id="sfx:S3939"/>
<dbReference type="PATRIC" id="fig|198214.7.peg.4517"/>
<dbReference type="HOGENOM" id="CLU_135498_0_0_6"/>
<dbReference type="UniPathway" id="UPA00916">
    <property type="reaction ID" value="UER00888"/>
</dbReference>
<dbReference type="Proteomes" id="UP000001006">
    <property type="component" value="Chromosome"/>
</dbReference>
<dbReference type="Proteomes" id="UP000002673">
    <property type="component" value="Chromosome"/>
</dbReference>
<dbReference type="GO" id="GO:0005829">
    <property type="term" value="C:cytosol"/>
    <property type="evidence" value="ECO:0007669"/>
    <property type="project" value="TreeGrafter"/>
</dbReference>
<dbReference type="GO" id="GO:0062193">
    <property type="term" value="F:D-ribose pyranase activity"/>
    <property type="evidence" value="ECO:0007669"/>
    <property type="project" value="UniProtKB-EC"/>
</dbReference>
<dbReference type="GO" id="GO:0016872">
    <property type="term" value="F:intramolecular lyase activity"/>
    <property type="evidence" value="ECO:0007669"/>
    <property type="project" value="UniProtKB-UniRule"/>
</dbReference>
<dbReference type="GO" id="GO:0048029">
    <property type="term" value="F:monosaccharide binding"/>
    <property type="evidence" value="ECO:0007669"/>
    <property type="project" value="InterPro"/>
</dbReference>
<dbReference type="GO" id="GO:0019303">
    <property type="term" value="P:D-ribose catabolic process"/>
    <property type="evidence" value="ECO:0007669"/>
    <property type="project" value="UniProtKB-UniRule"/>
</dbReference>
<dbReference type="FunFam" id="3.40.1650.10:FF:000002">
    <property type="entry name" value="D-ribose pyranase"/>
    <property type="match status" value="1"/>
</dbReference>
<dbReference type="Gene3D" id="3.40.1650.10">
    <property type="entry name" value="RbsD-like domain"/>
    <property type="match status" value="1"/>
</dbReference>
<dbReference type="HAMAP" id="MF_01661">
    <property type="entry name" value="D_rib_pyranase"/>
    <property type="match status" value="1"/>
</dbReference>
<dbReference type="InterPro" id="IPR023064">
    <property type="entry name" value="D-ribose_pyranase"/>
</dbReference>
<dbReference type="InterPro" id="IPR023750">
    <property type="entry name" value="RbsD-like_sf"/>
</dbReference>
<dbReference type="InterPro" id="IPR007721">
    <property type="entry name" value="RbsD_FucU"/>
</dbReference>
<dbReference type="NCBIfam" id="NF008761">
    <property type="entry name" value="PRK11797.1"/>
    <property type="match status" value="1"/>
</dbReference>
<dbReference type="PANTHER" id="PTHR37831">
    <property type="entry name" value="D-RIBOSE PYRANASE"/>
    <property type="match status" value="1"/>
</dbReference>
<dbReference type="PANTHER" id="PTHR37831:SF1">
    <property type="entry name" value="D-RIBOSE PYRANASE"/>
    <property type="match status" value="1"/>
</dbReference>
<dbReference type="Pfam" id="PF05025">
    <property type="entry name" value="RbsD_FucU"/>
    <property type="match status" value="1"/>
</dbReference>
<dbReference type="SUPFAM" id="SSF102546">
    <property type="entry name" value="RbsD-like"/>
    <property type="match status" value="1"/>
</dbReference>
<protein>
    <recommendedName>
        <fullName evidence="1">D-ribose pyranase</fullName>
        <ecNumber evidence="1">5.4.99.62</ecNumber>
    </recommendedName>
</protein>
<name>RBSD_SHIFL</name>
<keyword id="KW-0119">Carbohydrate metabolism</keyword>
<keyword id="KW-0963">Cytoplasm</keyword>
<keyword id="KW-0413">Isomerase</keyword>
<keyword id="KW-1185">Reference proteome</keyword>
<evidence type="ECO:0000255" key="1">
    <source>
        <dbReference type="HAMAP-Rule" id="MF_01661"/>
    </source>
</evidence>
<sequence length="139" mass="15283">MKKGTVLNSDISSVISRLGHTDTLVVCDAGLPIPKSTTRIDMALTQGVPSFMQVLGVVTNEMQVEAAIIAEEIKQHNPQLHETLLTHLEQLQKHQGNTIEIRYTTHEQFKQQTAESQAVIRSGECSPYANIILCAGVTF</sequence>
<accession>Q83PJ1</accession>
<accession>Q7UB29</accession>
<comment type="function">
    <text evidence="1">Catalyzes the interconversion of beta-pyran and beta-furan forms of D-ribose.</text>
</comment>
<comment type="catalytic activity">
    <reaction evidence="1">
        <text>beta-D-ribopyranose = beta-D-ribofuranose</text>
        <dbReference type="Rhea" id="RHEA:25432"/>
        <dbReference type="ChEBI" id="CHEBI:27476"/>
        <dbReference type="ChEBI" id="CHEBI:47002"/>
        <dbReference type="EC" id="5.4.99.62"/>
    </reaction>
</comment>
<comment type="pathway">
    <text evidence="1">Carbohydrate metabolism; D-ribose degradation; D-ribose 5-phosphate from beta-D-ribopyranose: step 1/2.</text>
</comment>
<comment type="subunit">
    <text evidence="1">Homodecamer.</text>
</comment>
<comment type="subcellular location">
    <subcellularLocation>
        <location evidence="1">Cytoplasm</location>
    </subcellularLocation>
</comment>
<comment type="similarity">
    <text evidence="1">Belongs to the RbsD / FucU family. RbsD subfamily.</text>
</comment>
<feature type="chain" id="PRO_0000346258" description="D-ribose pyranase">
    <location>
        <begin position="1"/>
        <end position="139"/>
    </location>
</feature>
<feature type="active site" description="Proton donor" evidence="1">
    <location>
        <position position="20"/>
    </location>
</feature>
<feature type="binding site" evidence="1">
    <location>
        <position position="28"/>
    </location>
    <ligand>
        <name>substrate</name>
    </ligand>
</feature>
<feature type="binding site" evidence="1">
    <location>
        <position position="106"/>
    </location>
    <ligand>
        <name>substrate</name>
    </ligand>
</feature>
<feature type="binding site" evidence="1">
    <location>
        <begin position="128"/>
        <end position="130"/>
    </location>
    <ligand>
        <name>substrate</name>
    </ligand>
</feature>
<proteinExistence type="inferred from homology"/>
<organism>
    <name type="scientific">Shigella flexneri</name>
    <dbReference type="NCBI Taxonomy" id="623"/>
    <lineage>
        <taxon>Bacteria</taxon>
        <taxon>Pseudomonadati</taxon>
        <taxon>Pseudomonadota</taxon>
        <taxon>Gammaproteobacteria</taxon>
        <taxon>Enterobacterales</taxon>
        <taxon>Enterobacteriaceae</taxon>
        <taxon>Shigella</taxon>
    </lineage>
</organism>
<reference key="1">
    <citation type="journal article" date="2002" name="Nucleic Acids Res.">
        <title>Genome sequence of Shigella flexneri 2a: insights into pathogenicity through comparison with genomes of Escherichia coli K12 and O157.</title>
        <authorList>
            <person name="Jin Q."/>
            <person name="Yuan Z."/>
            <person name="Xu J."/>
            <person name="Wang Y."/>
            <person name="Shen Y."/>
            <person name="Lu W."/>
            <person name="Wang J."/>
            <person name="Liu H."/>
            <person name="Yang J."/>
            <person name="Yang F."/>
            <person name="Zhang X."/>
            <person name="Zhang J."/>
            <person name="Yang G."/>
            <person name="Wu H."/>
            <person name="Qu D."/>
            <person name="Dong J."/>
            <person name="Sun L."/>
            <person name="Xue Y."/>
            <person name="Zhao A."/>
            <person name="Gao Y."/>
            <person name="Zhu J."/>
            <person name="Kan B."/>
            <person name="Ding K."/>
            <person name="Chen S."/>
            <person name="Cheng H."/>
            <person name="Yao Z."/>
            <person name="He B."/>
            <person name="Chen R."/>
            <person name="Ma D."/>
            <person name="Qiang B."/>
            <person name="Wen Y."/>
            <person name="Hou Y."/>
            <person name="Yu J."/>
        </authorList>
    </citation>
    <scope>NUCLEOTIDE SEQUENCE [LARGE SCALE GENOMIC DNA]</scope>
    <source>
        <strain>301 / Serotype 2a</strain>
    </source>
</reference>
<reference key="2">
    <citation type="journal article" date="2003" name="Infect. Immun.">
        <title>Complete genome sequence and comparative genomics of Shigella flexneri serotype 2a strain 2457T.</title>
        <authorList>
            <person name="Wei J."/>
            <person name="Goldberg M.B."/>
            <person name="Burland V."/>
            <person name="Venkatesan M.M."/>
            <person name="Deng W."/>
            <person name="Fournier G."/>
            <person name="Mayhew G.F."/>
            <person name="Plunkett G. III"/>
            <person name="Rose D.J."/>
            <person name="Darling A."/>
            <person name="Mau B."/>
            <person name="Perna N.T."/>
            <person name="Payne S.M."/>
            <person name="Runyen-Janecky L.J."/>
            <person name="Zhou S."/>
            <person name="Schwartz D.C."/>
            <person name="Blattner F.R."/>
        </authorList>
    </citation>
    <scope>NUCLEOTIDE SEQUENCE [LARGE SCALE GENOMIC DNA]</scope>
    <source>
        <strain>ATCC 700930 / 2457T / Serotype 2a</strain>
    </source>
</reference>
<gene>
    <name evidence="1" type="primary">rbsD</name>
    <name type="ordered locus">SF3829</name>
    <name type="ordered locus">S3939</name>
</gene>